<keyword id="KW-0479">Metal-binding</keyword>
<keyword id="KW-0520">NAD</keyword>
<keyword id="KW-0521">NADP</keyword>
<keyword id="KW-0558">Oxidation</keyword>
<keyword id="KW-0560">Oxidoreductase</keyword>
<keyword id="KW-0630">Potassium</keyword>
<accession>A7N2Q0</accession>
<dbReference type="EC" id="1.2.1.8" evidence="1"/>
<dbReference type="EMBL" id="CP000790">
    <property type="protein sequence ID" value="ABU74072.1"/>
    <property type="molecule type" value="Genomic_DNA"/>
</dbReference>
<dbReference type="RefSeq" id="WP_012129669.1">
    <property type="nucleotide sequence ID" value="NC_009784.1"/>
</dbReference>
<dbReference type="SMR" id="A7N2Q0"/>
<dbReference type="KEGG" id="vha:VIBHAR_06180"/>
<dbReference type="PATRIC" id="fig|338187.25.peg.4150"/>
<dbReference type="UniPathway" id="UPA00529">
    <property type="reaction ID" value="UER00386"/>
</dbReference>
<dbReference type="Proteomes" id="UP000008152">
    <property type="component" value="Chromosome II"/>
</dbReference>
<dbReference type="GO" id="GO:0008802">
    <property type="term" value="F:betaine-aldehyde dehydrogenase (NAD+) activity"/>
    <property type="evidence" value="ECO:0007669"/>
    <property type="project" value="UniProtKB-UniRule"/>
</dbReference>
<dbReference type="GO" id="GO:0046872">
    <property type="term" value="F:metal ion binding"/>
    <property type="evidence" value="ECO:0007669"/>
    <property type="project" value="UniProtKB-KW"/>
</dbReference>
<dbReference type="GO" id="GO:0019285">
    <property type="term" value="P:glycine betaine biosynthetic process from choline"/>
    <property type="evidence" value="ECO:0007669"/>
    <property type="project" value="UniProtKB-UniRule"/>
</dbReference>
<dbReference type="CDD" id="cd07090">
    <property type="entry name" value="ALDH_F9_TMBADH"/>
    <property type="match status" value="1"/>
</dbReference>
<dbReference type="FunFam" id="3.40.309.10:FF:000012">
    <property type="entry name" value="Betaine aldehyde dehydrogenase"/>
    <property type="match status" value="1"/>
</dbReference>
<dbReference type="FunFam" id="3.40.605.10:FF:000007">
    <property type="entry name" value="NAD/NADP-dependent betaine aldehyde dehydrogenase"/>
    <property type="match status" value="1"/>
</dbReference>
<dbReference type="Gene3D" id="3.40.605.10">
    <property type="entry name" value="Aldehyde Dehydrogenase, Chain A, domain 1"/>
    <property type="match status" value="1"/>
</dbReference>
<dbReference type="Gene3D" id="3.40.309.10">
    <property type="entry name" value="Aldehyde Dehydrogenase, Chain A, domain 2"/>
    <property type="match status" value="1"/>
</dbReference>
<dbReference type="HAMAP" id="MF_00804">
    <property type="entry name" value="BADH"/>
    <property type="match status" value="1"/>
</dbReference>
<dbReference type="InterPro" id="IPR016161">
    <property type="entry name" value="Ald_DH/histidinol_DH"/>
</dbReference>
<dbReference type="InterPro" id="IPR016163">
    <property type="entry name" value="Ald_DH_C"/>
</dbReference>
<dbReference type="InterPro" id="IPR029510">
    <property type="entry name" value="Ald_DH_CS_GLU"/>
</dbReference>
<dbReference type="InterPro" id="IPR016162">
    <property type="entry name" value="Ald_DH_N"/>
</dbReference>
<dbReference type="InterPro" id="IPR015590">
    <property type="entry name" value="Aldehyde_DH_dom"/>
</dbReference>
<dbReference type="InterPro" id="IPR011264">
    <property type="entry name" value="BADH"/>
</dbReference>
<dbReference type="NCBIfam" id="NF009725">
    <property type="entry name" value="PRK13252.1"/>
    <property type="match status" value="1"/>
</dbReference>
<dbReference type="PANTHER" id="PTHR11699">
    <property type="entry name" value="ALDEHYDE DEHYDROGENASE-RELATED"/>
    <property type="match status" value="1"/>
</dbReference>
<dbReference type="Pfam" id="PF00171">
    <property type="entry name" value="Aldedh"/>
    <property type="match status" value="1"/>
</dbReference>
<dbReference type="SUPFAM" id="SSF53720">
    <property type="entry name" value="ALDH-like"/>
    <property type="match status" value="1"/>
</dbReference>
<dbReference type="PROSITE" id="PS00687">
    <property type="entry name" value="ALDEHYDE_DEHYDR_GLU"/>
    <property type="match status" value="1"/>
</dbReference>
<organism>
    <name type="scientific">Vibrio campbellii (strain ATCC BAA-1116)</name>
    <dbReference type="NCBI Taxonomy" id="2902295"/>
    <lineage>
        <taxon>Bacteria</taxon>
        <taxon>Pseudomonadati</taxon>
        <taxon>Pseudomonadota</taxon>
        <taxon>Gammaproteobacteria</taxon>
        <taxon>Vibrionales</taxon>
        <taxon>Vibrionaceae</taxon>
        <taxon>Vibrio</taxon>
    </lineage>
</organism>
<gene>
    <name evidence="1" type="primary">betB</name>
    <name type="ordered locus">VIBHAR_06180</name>
</gene>
<feature type="chain" id="PRO_1000047059" description="Betaine aldehyde dehydrogenase">
    <location>
        <begin position="1"/>
        <end position="486"/>
    </location>
</feature>
<feature type="active site" description="Charge relay system" evidence="1">
    <location>
        <position position="159"/>
    </location>
</feature>
<feature type="active site" description="Proton acceptor" evidence="1">
    <location>
        <position position="247"/>
    </location>
</feature>
<feature type="active site" description="Nucleophile" evidence="1">
    <location>
        <position position="281"/>
    </location>
</feature>
<feature type="active site" description="Charge relay system" evidence="1">
    <location>
        <position position="459"/>
    </location>
</feature>
<feature type="binding site" evidence="1">
    <location>
        <position position="23"/>
    </location>
    <ligand>
        <name>K(+)</name>
        <dbReference type="ChEBI" id="CHEBI:29103"/>
        <label>1</label>
    </ligand>
</feature>
<feature type="binding site" evidence="1">
    <location>
        <position position="90"/>
    </location>
    <ligand>
        <name>K(+)</name>
        <dbReference type="ChEBI" id="CHEBI:29103"/>
        <label>1</label>
    </ligand>
</feature>
<feature type="binding site" evidence="1">
    <location>
        <begin position="147"/>
        <end position="149"/>
    </location>
    <ligand>
        <name>NAD(+)</name>
        <dbReference type="ChEBI" id="CHEBI:57540"/>
    </ligand>
</feature>
<feature type="binding site" evidence="1">
    <location>
        <begin position="173"/>
        <end position="176"/>
    </location>
    <ligand>
        <name>NAD(+)</name>
        <dbReference type="ChEBI" id="CHEBI:57540"/>
    </ligand>
</feature>
<feature type="binding site" evidence="1">
    <location>
        <begin position="226"/>
        <end position="229"/>
    </location>
    <ligand>
        <name>NAD(+)</name>
        <dbReference type="ChEBI" id="CHEBI:57540"/>
    </ligand>
</feature>
<feature type="binding site" evidence="1">
    <location>
        <position position="241"/>
    </location>
    <ligand>
        <name>K(+)</name>
        <dbReference type="ChEBI" id="CHEBI:29103"/>
        <label>2</label>
    </ligand>
</feature>
<feature type="binding site" evidence="1">
    <location>
        <position position="249"/>
    </location>
    <ligand>
        <name>NAD(+)</name>
        <dbReference type="ChEBI" id="CHEBI:57540"/>
    </ligand>
</feature>
<feature type="binding site" description="covalent" evidence="1">
    <location>
        <position position="281"/>
    </location>
    <ligand>
        <name>NAD(+)</name>
        <dbReference type="ChEBI" id="CHEBI:57540"/>
    </ligand>
</feature>
<feature type="binding site" evidence="1">
    <location>
        <position position="382"/>
    </location>
    <ligand>
        <name>NAD(+)</name>
        <dbReference type="ChEBI" id="CHEBI:57540"/>
    </ligand>
</feature>
<feature type="binding site" evidence="1">
    <location>
        <position position="452"/>
    </location>
    <ligand>
        <name>K(+)</name>
        <dbReference type="ChEBI" id="CHEBI:29103"/>
        <label>2</label>
    </ligand>
</feature>
<feature type="binding site" evidence="1">
    <location>
        <position position="455"/>
    </location>
    <ligand>
        <name>K(+)</name>
        <dbReference type="ChEBI" id="CHEBI:29103"/>
        <label>2</label>
    </ligand>
</feature>
<feature type="modified residue" description="Cysteine sulfenic acid (-SOH)" evidence="1">
    <location>
        <position position="281"/>
    </location>
</feature>
<comment type="function">
    <text evidence="1">Involved in the biosynthesis of the osmoprotectant glycine betaine. Catalyzes the irreversible oxidation of betaine aldehyde to the corresponding acid.</text>
</comment>
<comment type="catalytic activity">
    <reaction evidence="1">
        <text>betaine aldehyde + NAD(+) + H2O = glycine betaine + NADH + 2 H(+)</text>
        <dbReference type="Rhea" id="RHEA:15305"/>
        <dbReference type="ChEBI" id="CHEBI:15377"/>
        <dbReference type="ChEBI" id="CHEBI:15378"/>
        <dbReference type="ChEBI" id="CHEBI:15710"/>
        <dbReference type="ChEBI" id="CHEBI:17750"/>
        <dbReference type="ChEBI" id="CHEBI:57540"/>
        <dbReference type="ChEBI" id="CHEBI:57945"/>
        <dbReference type="EC" id="1.2.1.8"/>
    </reaction>
    <physiologicalReaction direction="left-to-right" evidence="1">
        <dbReference type="Rhea" id="RHEA:15306"/>
    </physiologicalReaction>
</comment>
<comment type="cofactor">
    <cofactor evidence="1">
        <name>K(+)</name>
        <dbReference type="ChEBI" id="CHEBI:29103"/>
    </cofactor>
    <text evidence="1">Binds 2 potassium ions per subunit.</text>
</comment>
<comment type="pathway">
    <text evidence="1">Amine and polyamine biosynthesis; betaine biosynthesis via choline pathway; betaine from betaine aldehyde: step 1/1.</text>
</comment>
<comment type="subunit">
    <text evidence="1">Dimer of dimers.</text>
</comment>
<comment type="similarity">
    <text evidence="1">Belongs to the aldehyde dehydrogenase family.</text>
</comment>
<evidence type="ECO:0000255" key="1">
    <source>
        <dbReference type="HAMAP-Rule" id="MF_00804"/>
    </source>
</evidence>
<proteinExistence type="inferred from homology"/>
<protein>
    <recommendedName>
        <fullName evidence="1">Betaine aldehyde dehydrogenase</fullName>
        <shortName evidence="1">BADH</shortName>
        <ecNumber evidence="1">1.2.1.8</ecNumber>
    </recommendedName>
</protein>
<reference key="1">
    <citation type="submission" date="2007-08" db="EMBL/GenBank/DDBJ databases">
        <authorList>
            <consortium name="The Vibrio harveyi Genome Sequencing Project"/>
            <person name="Bassler B."/>
            <person name="Clifton S.W."/>
            <person name="Fulton L."/>
            <person name="Delehaunty K."/>
            <person name="Fronick C."/>
            <person name="Harrison M."/>
            <person name="Markivic C."/>
            <person name="Fulton R."/>
            <person name="Tin-Wollam A.-M."/>
            <person name="Shah N."/>
            <person name="Pepin K."/>
            <person name="Nash W."/>
            <person name="Thiruvilangam P."/>
            <person name="Bhonagiri V."/>
            <person name="Waters C."/>
            <person name="Tu K.C."/>
            <person name="Irgon J."/>
            <person name="Wilson R.K."/>
        </authorList>
    </citation>
    <scope>NUCLEOTIDE SEQUENCE [LARGE SCALE GENOMIC DNA]</scope>
    <source>
        <strain>ATCC BAA-1116 / BB120</strain>
    </source>
</reference>
<sequence length="486" mass="52631">MDMKAHYIDGAMHLGCSEEHFTTYNPANGEPLANVKQANQQDMQAAIESAKRGFAIWSAMTATERSRILLKAVALLRERNDELAALEVADTGKPIQEANCVDIATGADVIEYYAGLAPSMHGEQQPLNESQFFYTRREPLGICAGIGAWNYPIQIAMWKSAPALAAGNAMIFKPSEETPLTALKLAEIYSEAGLPDGVFNVIQGDYRVGQMLTAHPDIAKVSFTGESGTGKVVMGDSAATLKQVTMELGGKSPMIIFDDAKLDDAVSAAMVANFYTQGEVCTHGTRVFVHEGIYDEFVVQLKKRTELLVVGDPLDEQTQIGALISKEHESKVLSAIEQAKASKATLLTGGYKVTENGLASGNFVVPTVFIDCEDDMPHVQQEIFGPVMSVLKFSDEDEVIARANNTDYGLAAGVFTQNLSRAHRVIHQIQAGICWINTWGDSPAEMPVGGYKLSGIGRENGVETLTHYTQTKSVLVHLGDFDSPYA</sequence>
<name>BETB_VIBC1</name>